<evidence type="ECO:0000255" key="1">
    <source>
        <dbReference type="HAMAP-Rule" id="MF_01825"/>
    </source>
</evidence>
<evidence type="ECO:0000269" key="2">
    <source>
    </source>
</evidence>
<evidence type="ECO:0000269" key="3">
    <source>
    </source>
</evidence>
<gene>
    <name evidence="1" type="primary">pdxB</name>
    <name type="ordered locus">b2320</name>
    <name type="ordered locus">JW2317</name>
</gene>
<protein>
    <recommendedName>
        <fullName evidence="1">Erythronate-4-phosphate dehydrogenase</fullName>
        <ecNumber evidence="1">1.1.1.290</ecNumber>
    </recommendedName>
</protein>
<organism>
    <name type="scientific">Escherichia coli (strain K12)</name>
    <dbReference type="NCBI Taxonomy" id="83333"/>
    <lineage>
        <taxon>Bacteria</taxon>
        <taxon>Pseudomonadati</taxon>
        <taxon>Pseudomonadota</taxon>
        <taxon>Gammaproteobacteria</taxon>
        <taxon>Enterobacterales</taxon>
        <taxon>Enterobacteriaceae</taxon>
        <taxon>Escherichia</taxon>
    </lineage>
</organism>
<proteinExistence type="evidence at transcript level"/>
<reference key="1">
    <citation type="journal article" date="1989" name="J. Bacteriol.">
        <title>Divergent transcription of pdxB and homology between the pdxB and serA gene products in Escherichia coli K-12.</title>
        <authorList>
            <person name="Schoenlein P.V."/>
            <person name="Roa B.B."/>
            <person name="Winkler M.E."/>
        </authorList>
    </citation>
    <scope>NUCLEOTIDE SEQUENCE [GENOMIC DNA]</scope>
    <source>
        <strain>K12 / W3110 / ATCC 27325 / DSM 5911</strain>
    </source>
</reference>
<reference key="2">
    <citation type="journal article" date="1997" name="DNA Res.">
        <title>Construction of a contiguous 874-kb sequence of the Escherichia coli-K12 genome corresponding to 50.0-68.8 min on the linkage map and analysis of its sequence features.</title>
        <authorList>
            <person name="Yamamoto Y."/>
            <person name="Aiba H."/>
            <person name="Baba T."/>
            <person name="Hayashi K."/>
            <person name="Inada T."/>
            <person name="Isono K."/>
            <person name="Itoh T."/>
            <person name="Kimura S."/>
            <person name="Kitagawa M."/>
            <person name="Makino K."/>
            <person name="Miki T."/>
            <person name="Mitsuhashi N."/>
            <person name="Mizobuchi K."/>
            <person name="Mori H."/>
            <person name="Nakade S."/>
            <person name="Nakamura Y."/>
            <person name="Nashimoto H."/>
            <person name="Oshima T."/>
            <person name="Oyama S."/>
            <person name="Saito N."/>
            <person name="Sampei G."/>
            <person name="Satoh Y."/>
            <person name="Sivasundaram S."/>
            <person name="Tagami H."/>
            <person name="Takahashi H."/>
            <person name="Takeda J."/>
            <person name="Takemoto K."/>
            <person name="Uehara K."/>
            <person name="Wada C."/>
            <person name="Yamagata S."/>
            <person name="Horiuchi T."/>
        </authorList>
    </citation>
    <scope>NUCLEOTIDE SEQUENCE [LARGE SCALE GENOMIC DNA]</scope>
    <source>
        <strain>K12 / W3110 / ATCC 27325 / DSM 5911</strain>
    </source>
</reference>
<reference key="3">
    <citation type="journal article" date="1997" name="Science">
        <title>The complete genome sequence of Escherichia coli K-12.</title>
        <authorList>
            <person name="Blattner F.R."/>
            <person name="Plunkett G. III"/>
            <person name="Bloch C.A."/>
            <person name="Perna N.T."/>
            <person name="Burland V."/>
            <person name="Riley M."/>
            <person name="Collado-Vides J."/>
            <person name="Glasner J.D."/>
            <person name="Rode C.K."/>
            <person name="Mayhew G.F."/>
            <person name="Gregor J."/>
            <person name="Davis N.W."/>
            <person name="Kirkpatrick H.A."/>
            <person name="Goeden M.A."/>
            <person name="Rose D.J."/>
            <person name="Mau B."/>
            <person name="Shao Y."/>
        </authorList>
    </citation>
    <scope>NUCLEOTIDE SEQUENCE [LARGE SCALE GENOMIC DNA]</scope>
    <source>
        <strain>K12 / MG1655 / ATCC 47076</strain>
    </source>
</reference>
<reference key="4">
    <citation type="journal article" date="2006" name="Mol. Syst. Biol.">
        <title>Highly accurate genome sequences of Escherichia coli K-12 strains MG1655 and W3110.</title>
        <authorList>
            <person name="Hayashi K."/>
            <person name="Morooka N."/>
            <person name="Yamamoto Y."/>
            <person name="Fujita K."/>
            <person name="Isono K."/>
            <person name="Choi S."/>
            <person name="Ohtsubo E."/>
            <person name="Baba T."/>
            <person name="Wanner B.L."/>
            <person name="Mori H."/>
            <person name="Horiuchi T."/>
        </authorList>
    </citation>
    <scope>NUCLEOTIDE SEQUENCE [LARGE SCALE GENOMIC DNA]</scope>
    <source>
        <strain>K12 / W3110 / ATCC 27325 / DSM 5911</strain>
    </source>
</reference>
<reference key="5">
    <citation type="journal article" date="1985" name="Nucleic Acids Res.">
        <title>Structural features of the hisT operon of Escherichia coli K-12.</title>
        <authorList>
            <person name="Arps P.J."/>
            <person name="Marvel C.C."/>
            <person name="Rubin B.C."/>
            <person name="Tolan D.A."/>
            <person name="Penhoet E.E."/>
            <person name="Winkler M.E."/>
        </authorList>
    </citation>
    <scope>NUCLEOTIDE SEQUENCE [GENOMIC DNA] OF 273-378</scope>
    <source>
        <strain>K12</strain>
    </source>
</reference>
<reference key="6">
    <citation type="journal article" date="1987" name="J. Bacteriol.">
        <title>Structural analysis of the Escherichia coli K-12 hisT operon by using a kanamycin resistance cassette.</title>
        <authorList>
            <person name="Arps P.J."/>
            <person name="Winkler M.E."/>
        </authorList>
    </citation>
    <scope>NUCLEOTIDE SEQUENCE [GENOMIC DNA] OF 273-378</scope>
    <source>
        <strain>K12</strain>
    </source>
</reference>
<reference key="7">
    <citation type="journal article" date="1996" name="FEMS Microbiol. Lett.">
        <title>4-phospho-hydroxy-L-threonine is an obligatory intermediate in pyridoxal 5'-phosphate coenzyme biosynthesis in Escherichia coli K-12.</title>
        <authorList>
            <person name="Zhao G."/>
            <person name="Winkler M.E."/>
        </authorList>
    </citation>
    <scope>PATHWAY</scope>
</reference>
<reference key="8">
    <citation type="journal article" date="1998" name="J. Bacteriol.">
        <title>Involvement of the gapA- and epd (gapB)-encoded dehydrogenases in pyridoxal 5'-phosphate coenzyme biosynthesis in Escherichia coli K-12.</title>
        <authorList>
            <person name="Yang Y."/>
            <person name="Zhao G."/>
            <person name="Man T.-K."/>
            <person name="Winkler M.E."/>
        </authorList>
    </citation>
    <scope>PYRIDOXAL PHOSPHATE PATHWAY</scope>
</reference>
<reference key="9">
    <citation type="journal article" date="2002" name="J. Bacteriol.">
        <title>Positive growth rate-dependent regulation of the pdxA, ksgA, and pdxB genes of Escherichia coli K-12.</title>
        <authorList>
            <person name="Pease A.J."/>
            <person name="Roa B.R."/>
            <person name="Luo W."/>
            <person name="Winkler M.E."/>
        </authorList>
    </citation>
    <scope>INDUCTION</scope>
</reference>
<sequence>MKILVDENMPYARDLFSRLGEVTAVPGRPIPVAQLADADALMVRSVTKVNESLLAGKPIKFVGTATAGTDHVDEAWLKQAGIGFSAAPGCNAIAVVEYVFSSLLMLAERDGFSLYDRTVGIVGVGNVGRRLQARLEALGIKTLLCDPPRADRGDEGDFRSLDELVQRADILTFHTPLFKDGPYKTLHLADEKLIRSLKPGAILINACRGAVVDNTALLTCLNEGQKLSVVLDVWEGEPELNVELLKKVDIGTSHIAGYTLEGKARGTTQVFEAYSKFIGHEQHVALDTLLPAPEFGRITLHGPLDQPTLKRLVHLVYDVRRDDAPLRKVAGIPGEFDKLRKNYLERREWSSLYVICDDASAASLLCKLGFNAVHHPAR</sequence>
<accession>P05459</accession>
<keyword id="KW-0963">Cytoplasm</keyword>
<keyword id="KW-0520">NAD</keyword>
<keyword id="KW-0560">Oxidoreductase</keyword>
<keyword id="KW-0664">Pyridoxine biosynthesis</keyword>
<keyword id="KW-1185">Reference proteome</keyword>
<comment type="function">
    <text evidence="1">Catalyzes the oxidation of erythronate-4-phosphate to 3-hydroxy-2-oxo-4-phosphonooxybutanoate.</text>
</comment>
<comment type="catalytic activity">
    <reaction evidence="1">
        <text>4-phospho-D-erythronate + NAD(+) = (R)-3-hydroxy-2-oxo-4-phosphooxybutanoate + NADH + H(+)</text>
        <dbReference type="Rhea" id="RHEA:18829"/>
        <dbReference type="ChEBI" id="CHEBI:15378"/>
        <dbReference type="ChEBI" id="CHEBI:57540"/>
        <dbReference type="ChEBI" id="CHEBI:57945"/>
        <dbReference type="ChEBI" id="CHEBI:58538"/>
        <dbReference type="ChEBI" id="CHEBI:58766"/>
        <dbReference type="EC" id="1.1.1.290"/>
    </reaction>
</comment>
<comment type="pathway">
    <text evidence="1 3">Cofactor biosynthesis; pyridoxine 5'-phosphate biosynthesis; pyridoxine 5'-phosphate from D-erythrose 4-phosphate: step 2/5.</text>
</comment>
<comment type="subunit">
    <text evidence="1">Homodimer.</text>
</comment>
<comment type="subcellular location">
    <subcellularLocation>
        <location evidence="1">Cytoplasm</location>
    </subcellularLocation>
</comment>
<comment type="induction">
    <text evidence="2">During growth rate.</text>
</comment>
<comment type="similarity">
    <text evidence="1">Belongs to the D-isomer specific 2-hydroxyacid dehydrogenase family. PdxB subfamily.</text>
</comment>
<dbReference type="EC" id="1.1.1.290" evidence="1"/>
<dbReference type="EMBL" id="M29962">
    <property type="protein sequence ID" value="AAA24308.1"/>
    <property type="molecule type" value="Genomic_DNA"/>
</dbReference>
<dbReference type="EMBL" id="U76961">
    <property type="protein sequence ID" value="AAB36530.1"/>
    <property type="molecule type" value="Genomic_DNA"/>
</dbReference>
<dbReference type="EMBL" id="U00096">
    <property type="protein sequence ID" value="AAC75380.1"/>
    <property type="molecule type" value="Genomic_DNA"/>
</dbReference>
<dbReference type="EMBL" id="AP009048">
    <property type="protein sequence ID" value="BAA16177.1"/>
    <property type="molecule type" value="Genomic_DNA"/>
</dbReference>
<dbReference type="EMBL" id="X02743">
    <property type="protein sequence ID" value="CAA26520.1"/>
    <property type="molecule type" value="Genomic_DNA"/>
</dbReference>
<dbReference type="EMBL" id="AH000888">
    <property type="protein sequence ID" value="AAA24310.1"/>
    <property type="molecule type" value="Genomic_DNA"/>
</dbReference>
<dbReference type="PIR" id="JV0051">
    <property type="entry name" value="DEECPP"/>
</dbReference>
<dbReference type="RefSeq" id="NP_416823.1">
    <property type="nucleotide sequence ID" value="NC_000913.3"/>
</dbReference>
<dbReference type="RefSeq" id="WP_000699148.1">
    <property type="nucleotide sequence ID" value="NZ_LN832404.1"/>
</dbReference>
<dbReference type="SMR" id="P05459"/>
<dbReference type="BioGRID" id="4259616">
    <property type="interactions" value="37"/>
</dbReference>
<dbReference type="DIP" id="DIP-10449N"/>
<dbReference type="FunCoup" id="P05459">
    <property type="interactions" value="190"/>
</dbReference>
<dbReference type="IntAct" id="P05459">
    <property type="interactions" value="9"/>
</dbReference>
<dbReference type="STRING" id="511145.b2320"/>
<dbReference type="jPOST" id="P05459"/>
<dbReference type="PaxDb" id="511145-b2320"/>
<dbReference type="EnsemblBacteria" id="AAC75380">
    <property type="protein sequence ID" value="AAC75380"/>
    <property type="gene ID" value="b2320"/>
</dbReference>
<dbReference type="GeneID" id="946785"/>
<dbReference type="KEGG" id="ecj:JW2317"/>
<dbReference type="KEGG" id="eco:b2320"/>
<dbReference type="KEGG" id="ecoc:C3026_12930"/>
<dbReference type="PATRIC" id="fig|1411691.4.peg.4413"/>
<dbReference type="EchoBASE" id="EB0686"/>
<dbReference type="eggNOG" id="COG0111">
    <property type="taxonomic scope" value="Bacteria"/>
</dbReference>
<dbReference type="HOGENOM" id="CLU_019796_4_0_6"/>
<dbReference type="InParanoid" id="P05459"/>
<dbReference type="OMA" id="SAPGCNA"/>
<dbReference type="OrthoDB" id="9770208at2"/>
<dbReference type="PhylomeDB" id="P05459"/>
<dbReference type="BioCyc" id="EcoCyc:ERYTHRON4PDEHYDROG-MONOMER"/>
<dbReference type="BioCyc" id="MetaCyc:ERYTHRON4PDEHYDROG-MONOMER"/>
<dbReference type="BRENDA" id="1.1.1.290">
    <property type="organism ID" value="2026"/>
</dbReference>
<dbReference type="UniPathway" id="UPA00244">
    <property type="reaction ID" value="UER00310"/>
</dbReference>
<dbReference type="PRO" id="PR:P05459"/>
<dbReference type="Proteomes" id="UP000000625">
    <property type="component" value="Chromosome"/>
</dbReference>
<dbReference type="GO" id="GO:0005829">
    <property type="term" value="C:cytosol"/>
    <property type="evidence" value="ECO:0000314"/>
    <property type="project" value="EcoCyc"/>
</dbReference>
<dbReference type="GO" id="GO:0033711">
    <property type="term" value="F:4-phosphoerythronate dehydrogenase activity"/>
    <property type="evidence" value="ECO:0000314"/>
    <property type="project" value="EcoCyc"/>
</dbReference>
<dbReference type="GO" id="GO:0051287">
    <property type="term" value="F:NAD binding"/>
    <property type="evidence" value="ECO:0000314"/>
    <property type="project" value="EcoCyc"/>
</dbReference>
<dbReference type="GO" id="GO:0042803">
    <property type="term" value="F:protein homodimerization activity"/>
    <property type="evidence" value="ECO:0000314"/>
    <property type="project" value="EcoCyc"/>
</dbReference>
<dbReference type="GO" id="GO:0036001">
    <property type="term" value="P:'de novo' pyridoxal 5'-phosphate biosynthetic process"/>
    <property type="evidence" value="ECO:0000315"/>
    <property type="project" value="EcoCyc"/>
</dbReference>
<dbReference type="GO" id="GO:0008615">
    <property type="term" value="P:pyridoxine biosynthetic process"/>
    <property type="evidence" value="ECO:0000315"/>
    <property type="project" value="EcoCyc"/>
</dbReference>
<dbReference type="CDD" id="cd12158">
    <property type="entry name" value="ErythrP_dh"/>
    <property type="match status" value="1"/>
</dbReference>
<dbReference type="FunFam" id="3.30.1370.170:FF:000001">
    <property type="entry name" value="Erythronate-4-phosphate dehydrogenase"/>
    <property type="match status" value="1"/>
</dbReference>
<dbReference type="FunFam" id="3.40.50.720:FF:000093">
    <property type="entry name" value="Erythronate-4-phosphate dehydrogenase"/>
    <property type="match status" value="1"/>
</dbReference>
<dbReference type="Gene3D" id="3.30.1370.170">
    <property type="match status" value="1"/>
</dbReference>
<dbReference type="Gene3D" id="3.40.50.720">
    <property type="entry name" value="NAD(P)-binding Rossmann-like Domain"/>
    <property type="match status" value="2"/>
</dbReference>
<dbReference type="HAMAP" id="MF_01825">
    <property type="entry name" value="PdxB"/>
    <property type="match status" value="1"/>
</dbReference>
<dbReference type="InterPro" id="IPR006139">
    <property type="entry name" value="D-isomer_2_OHA_DH_cat_dom"/>
</dbReference>
<dbReference type="InterPro" id="IPR029753">
    <property type="entry name" value="D-isomer_DH_CS"/>
</dbReference>
<dbReference type="InterPro" id="IPR029752">
    <property type="entry name" value="D-isomer_DH_CS1"/>
</dbReference>
<dbReference type="InterPro" id="IPR006140">
    <property type="entry name" value="D-isomer_DH_NAD-bd"/>
</dbReference>
<dbReference type="InterPro" id="IPR020921">
    <property type="entry name" value="Erythronate-4-P_DHase"/>
</dbReference>
<dbReference type="InterPro" id="IPR024531">
    <property type="entry name" value="Erythronate-4-P_DHase_dimer"/>
</dbReference>
<dbReference type="InterPro" id="IPR036291">
    <property type="entry name" value="NAD(P)-bd_dom_sf"/>
</dbReference>
<dbReference type="InterPro" id="IPR038251">
    <property type="entry name" value="PdxB_dimer_sf"/>
</dbReference>
<dbReference type="NCBIfam" id="NF001309">
    <property type="entry name" value="PRK00257.1"/>
    <property type="match status" value="1"/>
</dbReference>
<dbReference type="NCBIfam" id="NF011966">
    <property type="entry name" value="PRK15438.1"/>
    <property type="match status" value="1"/>
</dbReference>
<dbReference type="PANTHER" id="PTHR42938">
    <property type="entry name" value="FORMATE DEHYDROGENASE 1"/>
    <property type="match status" value="1"/>
</dbReference>
<dbReference type="PANTHER" id="PTHR42938:SF9">
    <property type="entry name" value="FORMATE DEHYDROGENASE 1"/>
    <property type="match status" value="1"/>
</dbReference>
<dbReference type="Pfam" id="PF00389">
    <property type="entry name" value="2-Hacid_dh"/>
    <property type="match status" value="1"/>
</dbReference>
<dbReference type="Pfam" id="PF02826">
    <property type="entry name" value="2-Hacid_dh_C"/>
    <property type="match status" value="1"/>
</dbReference>
<dbReference type="Pfam" id="PF11890">
    <property type="entry name" value="DUF3410"/>
    <property type="match status" value="1"/>
</dbReference>
<dbReference type="SUPFAM" id="SSF52283">
    <property type="entry name" value="Formate/glycerate dehydrogenase catalytic domain-like"/>
    <property type="match status" value="1"/>
</dbReference>
<dbReference type="SUPFAM" id="SSF51735">
    <property type="entry name" value="NAD(P)-binding Rossmann-fold domains"/>
    <property type="match status" value="1"/>
</dbReference>
<dbReference type="PROSITE" id="PS00065">
    <property type="entry name" value="D_2_HYDROXYACID_DH_1"/>
    <property type="match status" value="1"/>
</dbReference>
<dbReference type="PROSITE" id="PS00671">
    <property type="entry name" value="D_2_HYDROXYACID_DH_3"/>
    <property type="match status" value="1"/>
</dbReference>
<feature type="chain" id="PRO_0000075975" description="Erythronate-4-phosphate dehydrogenase">
    <location>
        <begin position="1"/>
        <end position="378"/>
    </location>
</feature>
<feature type="active site" evidence="1">
    <location>
        <position position="208"/>
    </location>
</feature>
<feature type="active site" evidence="1">
    <location>
        <position position="237"/>
    </location>
</feature>
<feature type="active site" description="Proton donor" evidence="1">
    <location>
        <position position="254"/>
    </location>
</feature>
<feature type="binding site" evidence="1">
    <location>
        <position position="45"/>
    </location>
    <ligand>
        <name>substrate</name>
    </ligand>
</feature>
<feature type="binding site" evidence="1">
    <location>
        <position position="66"/>
    </location>
    <ligand>
        <name>substrate</name>
    </ligand>
</feature>
<feature type="binding site" evidence="1">
    <location>
        <position position="146"/>
    </location>
    <ligand>
        <name>NAD(+)</name>
        <dbReference type="ChEBI" id="CHEBI:57540"/>
    </ligand>
</feature>
<feature type="binding site" evidence="1">
    <location>
        <position position="175"/>
    </location>
    <ligand>
        <name>NAD(+)</name>
        <dbReference type="ChEBI" id="CHEBI:57540"/>
    </ligand>
</feature>
<feature type="binding site" evidence="1">
    <location>
        <position position="232"/>
    </location>
    <ligand>
        <name>NAD(+)</name>
        <dbReference type="ChEBI" id="CHEBI:57540"/>
    </ligand>
</feature>
<feature type="binding site" evidence="1">
    <location>
        <position position="257"/>
    </location>
    <ligand>
        <name>NAD(+)</name>
        <dbReference type="ChEBI" id="CHEBI:57540"/>
    </ligand>
</feature>
<feature type="binding site" evidence="1">
    <location>
        <position position="258"/>
    </location>
    <ligand>
        <name>substrate</name>
    </ligand>
</feature>
<name>PDXB_ECOLI</name>